<name>RSMA_THET8</name>
<keyword id="KW-0002">3D-structure</keyword>
<keyword id="KW-0963">Cytoplasm</keyword>
<keyword id="KW-0489">Methyltransferase</keyword>
<keyword id="KW-1185">Reference proteome</keyword>
<keyword id="KW-0694">RNA-binding</keyword>
<keyword id="KW-0698">rRNA processing</keyword>
<keyword id="KW-0949">S-adenosyl-L-methionine</keyword>
<keyword id="KW-0808">Transferase</keyword>
<gene>
    <name evidence="1" type="primary">rsmA</name>
    <name evidence="1" type="synonym">ksgA</name>
    <name type="ordered locus">TTHA0083</name>
</gene>
<proteinExistence type="evidence at protein level"/>
<comment type="function">
    <text evidence="1">Specifically dimethylates two adjacent adenosines (A1518 and A1519) in the loop of a conserved hairpin near the 3'-end of 16S rRNA in the 30S particle. May play a critical role in biogenesis of 30S subunits.</text>
</comment>
<comment type="catalytic activity">
    <reaction evidence="1">
        <text>adenosine(1518)/adenosine(1519) in 16S rRNA + 4 S-adenosyl-L-methionine = N(6)-dimethyladenosine(1518)/N(6)-dimethyladenosine(1519) in 16S rRNA + 4 S-adenosyl-L-homocysteine + 4 H(+)</text>
        <dbReference type="Rhea" id="RHEA:19609"/>
        <dbReference type="Rhea" id="RHEA-COMP:10232"/>
        <dbReference type="Rhea" id="RHEA-COMP:10233"/>
        <dbReference type="ChEBI" id="CHEBI:15378"/>
        <dbReference type="ChEBI" id="CHEBI:57856"/>
        <dbReference type="ChEBI" id="CHEBI:59789"/>
        <dbReference type="ChEBI" id="CHEBI:74411"/>
        <dbReference type="ChEBI" id="CHEBI:74493"/>
        <dbReference type="EC" id="2.1.1.182"/>
    </reaction>
</comment>
<comment type="subcellular location">
    <subcellularLocation>
        <location evidence="1">Cytoplasm</location>
    </subcellularLocation>
</comment>
<comment type="similarity">
    <text evidence="1">Belongs to the class I-like SAM-binding methyltransferase superfamily. rRNA adenine N(6)-methyltransferase family. RsmA subfamily.</text>
</comment>
<protein>
    <recommendedName>
        <fullName evidence="1">Ribosomal RNA small subunit methyltransferase A</fullName>
        <ecNumber evidence="1">2.1.1.182</ecNumber>
    </recommendedName>
    <alternativeName>
        <fullName evidence="1">16S rRNA (adenine(1518)-N(6)/adenine(1519)-N(6))-dimethyltransferase</fullName>
    </alternativeName>
    <alternativeName>
        <fullName evidence="1">16S rRNA dimethyladenosine transferase</fullName>
    </alternativeName>
    <alternativeName>
        <fullName evidence="1">16S rRNA dimethylase</fullName>
    </alternativeName>
    <alternativeName>
        <fullName evidence="1">S-adenosylmethionine-6-N', N'-adenosyl(rRNA) dimethyltransferase</fullName>
    </alternativeName>
</protein>
<evidence type="ECO:0000255" key="1">
    <source>
        <dbReference type="HAMAP-Rule" id="MF_00607"/>
    </source>
</evidence>
<evidence type="ECO:0007829" key="2">
    <source>
        <dbReference type="PDB" id="3FUT"/>
    </source>
</evidence>
<evidence type="ECO:0007829" key="3">
    <source>
        <dbReference type="PDB" id="3FUU"/>
    </source>
</evidence>
<evidence type="ECO:0007829" key="4">
    <source>
        <dbReference type="PDB" id="3FUV"/>
    </source>
</evidence>
<evidence type="ECO:0007829" key="5">
    <source>
        <dbReference type="PDB" id="3FUW"/>
    </source>
</evidence>
<feature type="chain" id="PRO_0000101631" description="Ribosomal RNA small subunit methyltransferase A">
    <location>
        <begin position="1"/>
        <end position="271"/>
    </location>
</feature>
<feature type="binding site" evidence="1">
    <location>
        <position position="28"/>
    </location>
    <ligand>
        <name>S-adenosyl-L-methionine</name>
        <dbReference type="ChEBI" id="CHEBI:59789"/>
    </ligand>
</feature>
<feature type="binding site" evidence="1">
    <location>
        <position position="30"/>
    </location>
    <ligand>
        <name>S-adenosyl-L-methionine</name>
        <dbReference type="ChEBI" id="CHEBI:59789"/>
    </ligand>
</feature>
<feature type="binding site" evidence="1">
    <location>
        <position position="54"/>
    </location>
    <ligand>
        <name>S-adenosyl-L-methionine</name>
        <dbReference type="ChEBI" id="CHEBI:59789"/>
    </ligand>
</feature>
<feature type="binding site">
    <location>
        <position position="75"/>
    </location>
    <ligand>
        <name>S-adenosyl-L-methionine</name>
        <dbReference type="ChEBI" id="CHEBI:59789"/>
    </ligand>
</feature>
<feature type="binding site">
    <location>
        <position position="99"/>
    </location>
    <ligand>
        <name>S-adenosyl-L-methionine</name>
        <dbReference type="ChEBI" id="CHEBI:59789"/>
    </ligand>
</feature>
<feature type="binding site">
    <location>
        <position position="117"/>
    </location>
    <ligand>
        <name>S-adenosyl-L-methionine</name>
        <dbReference type="ChEBI" id="CHEBI:59789"/>
    </ligand>
</feature>
<feature type="helix" evidence="2">
    <location>
        <begin position="7"/>
        <end position="16"/>
    </location>
</feature>
<feature type="helix" evidence="3">
    <location>
        <begin position="23"/>
        <end position="25"/>
    </location>
</feature>
<feature type="helix" evidence="2">
    <location>
        <begin position="33"/>
        <end position="43"/>
    </location>
</feature>
<feature type="strand" evidence="2">
    <location>
        <begin position="50"/>
        <end position="53"/>
    </location>
</feature>
<feature type="turn" evidence="4">
    <location>
        <begin position="56"/>
        <end position="58"/>
    </location>
</feature>
<feature type="helix" evidence="2">
    <location>
        <begin position="59"/>
        <end position="66"/>
    </location>
</feature>
<feature type="strand" evidence="2">
    <location>
        <begin position="71"/>
        <end position="76"/>
    </location>
</feature>
<feature type="helix" evidence="2">
    <location>
        <begin position="78"/>
        <end position="80"/>
    </location>
</feature>
<feature type="helix" evidence="2">
    <location>
        <begin position="81"/>
        <end position="87"/>
    </location>
</feature>
<feature type="turn" evidence="2">
    <location>
        <begin position="88"/>
        <end position="90"/>
    </location>
</feature>
<feature type="strand" evidence="2">
    <location>
        <begin position="94"/>
        <end position="98"/>
    </location>
</feature>
<feature type="helix" evidence="2">
    <location>
        <begin position="100"/>
        <end position="102"/>
    </location>
</feature>
<feature type="helix" evidence="2">
    <location>
        <begin position="105"/>
        <end position="107"/>
    </location>
</feature>
<feature type="strand" evidence="2">
    <location>
        <begin position="112"/>
        <end position="118"/>
    </location>
</feature>
<feature type="turn" evidence="5">
    <location>
        <begin position="120"/>
        <end position="122"/>
    </location>
</feature>
<feature type="helix" evidence="2">
    <location>
        <begin position="124"/>
        <end position="133"/>
    </location>
</feature>
<feature type="strand" evidence="2">
    <location>
        <begin position="136"/>
        <end position="144"/>
    </location>
</feature>
<feature type="helix" evidence="2">
    <location>
        <begin position="145"/>
        <end position="151"/>
    </location>
</feature>
<feature type="helix" evidence="2">
    <location>
        <begin position="162"/>
        <end position="170"/>
    </location>
</feature>
<feature type="strand" evidence="2">
    <location>
        <begin position="171"/>
        <end position="179"/>
    </location>
</feature>
<feature type="helix" evidence="2">
    <location>
        <begin position="181"/>
        <end position="183"/>
    </location>
</feature>
<feature type="strand" evidence="2">
    <location>
        <begin position="184"/>
        <end position="186"/>
    </location>
</feature>
<feature type="strand" evidence="2">
    <location>
        <begin position="192"/>
        <end position="199"/>
    </location>
</feature>
<feature type="helix" evidence="2">
    <location>
        <begin position="206"/>
        <end position="215"/>
    </location>
</feature>
<feature type="helix" evidence="2">
    <location>
        <begin position="223"/>
        <end position="229"/>
    </location>
</feature>
<feature type="helix" evidence="2">
    <location>
        <begin position="234"/>
        <end position="243"/>
    </location>
</feature>
<feature type="helix" evidence="2">
    <location>
        <begin position="252"/>
        <end position="254"/>
    </location>
</feature>
<feature type="helix" evidence="2">
    <location>
        <begin position="257"/>
        <end position="267"/>
    </location>
</feature>
<accession>Q5SM60</accession>
<organism>
    <name type="scientific">Thermus thermophilus (strain ATCC 27634 / DSM 579 / HB8)</name>
    <dbReference type="NCBI Taxonomy" id="300852"/>
    <lineage>
        <taxon>Bacteria</taxon>
        <taxon>Thermotogati</taxon>
        <taxon>Deinococcota</taxon>
        <taxon>Deinococci</taxon>
        <taxon>Thermales</taxon>
        <taxon>Thermaceae</taxon>
        <taxon>Thermus</taxon>
    </lineage>
</organism>
<dbReference type="EC" id="2.1.1.182" evidence="1"/>
<dbReference type="EMBL" id="AP008226">
    <property type="protein sequence ID" value="BAD69906.1"/>
    <property type="molecule type" value="Genomic_DNA"/>
</dbReference>
<dbReference type="RefSeq" id="WP_011227698.1">
    <property type="nucleotide sequence ID" value="NC_006461.1"/>
</dbReference>
<dbReference type="RefSeq" id="YP_143349.1">
    <property type="nucleotide sequence ID" value="NC_006461.1"/>
</dbReference>
<dbReference type="PDB" id="3FUT">
    <property type="method" value="X-ray"/>
    <property type="resolution" value="1.52 A"/>
    <property type="chains" value="A/B=1-271"/>
</dbReference>
<dbReference type="PDB" id="3FUU">
    <property type="method" value="X-ray"/>
    <property type="resolution" value="1.53 A"/>
    <property type="chains" value="A=1-271"/>
</dbReference>
<dbReference type="PDB" id="3FUV">
    <property type="method" value="X-ray"/>
    <property type="resolution" value="1.95 A"/>
    <property type="chains" value="A/B/C=1-271"/>
</dbReference>
<dbReference type="PDB" id="3FUW">
    <property type="method" value="X-ray"/>
    <property type="resolution" value="1.56 A"/>
    <property type="chains" value="A=1-271"/>
</dbReference>
<dbReference type="PDB" id="3FUX">
    <property type="method" value="X-ray"/>
    <property type="resolution" value="1.68 A"/>
    <property type="chains" value="A/B/C=1-271"/>
</dbReference>
<dbReference type="PDBsum" id="3FUT"/>
<dbReference type="PDBsum" id="3FUU"/>
<dbReference type="PDBsum" id="3FUV"/>
<dbReference type="PDBsum" id="3FUW"/>
<dbReference type="PDBsum" id="3FUX"/>
<dbReference type="SMR" id="Q5SM60"/>
<dbReference type="EnsemblBacteria" id="BAD69906">
    <property type="protein sequence ID" value="BAD69906"/>
    <property type="gene ID" value="BAD69906"/>
</dbReference>
<dbReference type="GeneID" id="3169411"/>
<dbReference type="KEGG" id="ttj:TTHA0083"/>
<dbReference type="PATRIC" id="fig|300852.9.peg.81"/>
<dbReference type="eggNOG" id="COG0030">
    <property type="taxonomic scope" value="Bacteria"/>
</dbReference>
<dbReference type="HOGENOM" id="CLU_041220_0_1_0"/>
<dbReference type="PhylomeDB" id="Q5SM60"/>
<dbReference type="BRENDA" id="2.1.1.182">
    <property type="organism ID" value="2305"/>
</dbReference>
<dbReference type="EvolutionaryTrace" id="Q5SM60"/>
<dbReference type="Proteomes" id="UP000000532">
    <property type="component" value="Chromosome"/>
</dbReference>
<dbReference type="GO" id="GO:0005829">
    <property type="term" value="C:cytosol"/>
    <property type="evidence" value="ECO:0007669"/>
    <property type="project" value="TreeGrafter"/>
</dbReference>
<dbReference type="GO" id="GO:0052908">
    <property type="term" value="F:16S rRNA (adenine(1518)-N(6)/adenine(1519)-N(6))-dimethyltransferase activity"/>
    <property type="evidence" value="ECO:0007669"/>
    <property type="project" value="UniProtKB-EC"/>
</dbReference>
<dbReference type="GO" id="GO:0003723">
    <property type="term" value="F:RNA binding"/>
    <property type="evidence" value="ECO:0007669"/>
    <property type="project" value="UniProtKB-KW"/>
</dbReference>
<dbReference type="CDD" id="cd02440">
    <property type="entry name" value="AdoMet_MTases"/>
    <property type="match status" value="1"/>
</dbReference>
<dbReference type="Gene3D" id="1.10.8.100">
    <property type="entry name" value="Ribosomal RNA adenine dimethylase-like, domain 2"/>
    <property type="match status" value="1"/>
</dbReference>
<dbReference type="Gene3D" id="3.40.50.150">
    <property type="entry name" value="Vaccinia Virus protein VP39"/>
    <property type="match status" value="1"/>
</dbReference>
<dbReference type="HAMAP" id="MF_00607">
    <property type="entry name" value="16SrRNA_methyltr_A"/>
    <property type="match status" value="1"/>
</dbReference>
<dbReference type="InterPro" id="IPR001737">
    <property type="entry name" value="KsgA/Erm"/>
</dbReference>
<dbReference type="InterPro" id="IPR023165">
    <property type="entry name" value="rRNA_Ade_diMease-like_C"/>
</dbReference>
<dbReference type="InterPro" id="IPR020596">
    <property type="entry name" value="rRNA_Ade_Mease_Trfase_CS"/>
</dbReference>
<dbReference type="InterPro" id="IPR020598">
    <property type="entry name" value="rRNA_Ade_methylase_Trfase_N"/>
</dbReference>
<dbReference type="InterPro" id="IPR011530">
    <property type="entry name" value="rRNA_adenine_dimethylase"/>
</dbReference>
<dbReference type="InterPro" id="IPR029063">
    <property type="entry name" value="SAM-dependent_MTases_sf"/>
</dbReference>
<dbReference type="NCBIfam" id="TIGR00755">
    <property type="entry name" value="ksgA"/>
    <property type="match status" value="1"/>
</dbReference>
<dbReference type="PANTHER" id="PTHR11727">
    <property type="entry name" value="DIMETHYLADENOSINE TRANSFERASE"/>
    <property type="match status" value="1"/>
</dbReference>
<dbReference type="PANTHER" id="PTHR11727:SF7">
    <property type="entry name" value="DIMETHYLADENOSINE TRANSFERASE-RELATED"/>
    <property type="match status" value="1"/>
</dbReference>
<dbReference type="Pfam" id="PF00398">
    <property type="entry name" value="RrnaAD"/>
    <property type="match status" value="1"/>
</dbReference>
<dbReference type="SMART" id="SM00650">
    <property type="entry name" value="rADc"/>
    <property type="match status" value="1"/>
</dbReference>
<dbReference type="SUPFAM" id="SSF53335">
    <property type="entry name" value="S-adenosyl-L-methionine-dependent methyltransferases"/>
    <property type="match status" value="1"/>
</dbReference>
<dbReference type="PROSITE" id="PS01131">
    <property type="entry name" value="RRNA_A_DIMETH"/>
    <property type="match status" value="1"/>
</dbReference>
<dbReference type="PROSITE" id="PS51689">
    <property type="entry name" value="SAM_RNA_A_N6_MT"/>
    <property type="match status" value="1"/>
</dbReference>
<sequence length="271" mass="29866">MSKLASPQSVRALLERHGLFADKRFGQNFLVSEAHLRRIVEAARPFTGPVFEVGPGLGALTRALLEAGAEVTAIEKDLRLRPVLEETLSGLPVRLVFQDALLYPWEEVPQGSLLVANLPYHIATPLVTRLLKTGRFARLVFLVQKEVAERMTARPKTPAYGVLTLRVAHHAVAERLFDLPPGAFFPPPKVWSSLVRLTPTGALDDPGLFRLVEAAFGKRRKTLLNALAAAGYPKARVEEALRALGLPPRVRAEELDLEAFRRLREGLEGAV</sequence>
<reference key="1">
    <citation type="submission" date="2004-11" db="EMBL/GenBank/DDBJ databases">
        <title>Complete genome sequence of Thermus thermophilus HB8.</title>
        <authorList>
            <person name="Masui R."/>
            <person name="Kurokawa K."/>
            <person name="Nakagawa N."/>
            <person name="Tokunaga F."/>
            <person name="Koyama Y."/>
            <person name="Shibata T."/>
            <person name="Oshima T."/>
            <person name="Yokoyama S."/>
            <person name="Yasunaga T."/>
            <person name="Kuramitsu S."/>
        </authorList>
    </citation>
    <scope>NUCLEOTIDE SEQUENCE [LARGE SCALE GENOMIC DNA]</scope>
    <source>
        <strain>ATCC 27634 / DSM 579 / HB8</strain>
    </source>
</reference>
<reference key="2">
    <citation type="journal article" date="2009" name="J. Mol. Biol.">
        <title>Structural rearrangements in the active site of the Thermus thermophilus 16S rRNA methyltransferase KsgA in a binary complex with 5'-methylthioadenosine.</title>
        <authorList>
            <person name="Demirci H."/>
            <person name="Belardinelli R."/>
            <person name="Seri E."/>
            <person name="Gregory S.T."/>
            <person name="Gualerzi C."/>
            <person name="Dahlberg A.E."/>
            <person name="Jogl G."/>
        </authorList>
    </citation>
    <scope>X-RAY CRYSTALLOGRAPHY (1.52 ANGSTROMS) IN COMPLEX WITH 5'-DEOXY-5'-METHYLTHIOADENOSINE</scope>
</reference>